<feature type="chain" id="PRO_0000351223" description="NADPH--cytochrome P450 reductase">
    <location>
        <begin position="1"/>
        <end position="667"/>
    </location>
</feature>
<feature type="topological domain" description="Lumenal" evidence="1">
    <location>
        <begin position="1"/>
        <end position="8"/>
    </location>
</feature>
<feature type="transmembrane region" description="Helical" evidence="1">
    <location>
        <begin position="9"/>
        <end position="29"/>
    </location>
</feature>
<feature type="topological domain" description="Cytoplasmic" evidence="1">
    <location>
        <begin position="30"/>
        <end position="667"/>
    </location>
</feature>
<feature type="domain" description="Flavodoxin-like" evidence="1">
    <location>
        <begin position="72"/>
        <end position="215"/>
    </location>
</feature>
<feature type="domain" description="FAD-binding FR-type" evidence="1">
    <location>
        <begin position="277"/>
        <end position="511"/>
    </location>
</feature>
<feature type="binding site" evidence="1">
    <location>
        <begin position="164"/>
        <end position="173"/>
    </location>
    <ligand>
        <name>FMN</name>
        <dbReference type="ChEBI" id="CHEBI:58210"/>
    </ligand>
</feature>
<feature type="binding site" evidence="1">
    <location>
        <position position="199"/>
    </location>
    <ligand>
        <name>FMN</name>
        <dbReference type="ChEBI" id="CHEBI:58210"/>
    </ligand>
</feature>
<feature type="binding site" evidence="1">
    <location>
        <position position="297"/>
    </location>
    <ligand>
        <name>NADP(+)</name>
        <dbReference type="ChEBI" id="CHEBI:58349"/>
    </ligand>
</feature>
<feature type="binding site" evidence="1">
    <location>
        <begin position="468"/>
        <end position="470"/>
    </location>
    <ligand>
        <name>FAD</name>
        <dbReference type="ChEBI" id="CHEBI:57692"/>
    </ligand>
</feature>
<feature type="binding site" evidence="1">
    <location>
        <begin position="484"/>
        <end position="487"/>
    </location>
    <ligand>
        <name>FAD</name>
        <dbReference type="ChEBI" id="CHEBI:57692"/>
    </ligand>
</feature>
<feature type="binding site" evidence="1">
    <location>
        <position position="527"/>
    </location>
    <ligand>
        <name>NADP(+)</name>
        <dbReference type="ChEBI" id="CHEBI:58349"/>
    </ligand>
</feature>
<feature type="binding site" evidence="1">
    <location>
        <begin position="586"/>
        <end position="587"/>
    </location>
    <ligand>
        <name>NADP(+)</name>
        <dbReference type="ChEBI" id="CHEBI:58349"/>
    </ligand>
</feature>
<feature type="binding site" evidence="1">
    <location>
        <begin position="592"/>
        <end position="596"/>
    </location>
    <ligand>
        <name>NADP(+)</name>
        <dbReference type="ChEBI" id="CHEBI:58349"/>
    </ligand>
</feature>
<feature type="binding site" evidence="1">
    <location>
        <position position="666"/>
    </location>
    <ligand>
        <name>FAD</name>
        <dbReference type="ChEBI" id="CHEBI:57692"/>
    </ligand>
</feature>
<proteinExistence type="evidence at transcript level"/>
<dbReference type="EC" id="1.6.2.4" evidence="1"/>
<dbReference type="EMBL" id="AAFI02000005">
    <property type="protein sequence ID" value="EAL72306.1"/>
    <property type="molecule type" value="Genomic_DNA"/>
</dbReference>
<dbReference type="RefSeq" id="XP_646400.1">
    <property type="nucleotide sequence ID" value="XM_641308.1"/>
</dbReference>
<dbReference type="SMR" id="Q55CT1"/>
<dbReference type="FunCoup" id="Q55CT1">
    <property type="interactions" value="835"/>
</dbReference>
<dbReference type="STRING" id="44689.Q55CT1"/>
<dbReference type="PaxDb" id="44689-DDB0266665"/>
<dbReference type="EnsemblProtists" id="EAL72306">
    <property type="protein sequence ID" value="EAL72306"/>
    <property type="gene ID" value="DDB_G0269912"/>
</dbReference>
<dbReference type="GeneID" id="8617355"/>
<dbReference type="KEGG" id="ddi:DDB_G0269912"/>
<dbReference type="dictyBase" id="DDB_G0269912">
    <property type="gene designation" value="redB"/>
</dbReference>
<dbReference type="VEuPathDB" id="AmoebaDB:DDB_G0269912"/>
<dbReference type="eggNOG" id="KOG1158">
    <property type="taxonomic scope" value="Eukaryota"/>
</dbReference>
<dbReference type="HOGENOM" id="CLU_001570_17_3_1"/>
<dbReference type="InParanoid" id="Q55CT1"/>
<dbReference type="OMA" id="QKRYQRD"/>
<dbReference type="PhylomeDB" id="Q55CT1"/>
<dbReference type="Reactome" id="R-DDI-1222556">
    <property type="pathway name" value="ROS and RNS production in phagocytes"/>
</dbReference>
<dbReference type="Reactome" id="R-DDI-1474151">
    <property type="pathway name" value="Tetrahydrobiopterin (BH4) synthesis, recycling, salvage and regulation"/>
</dbReference>
<dbReference type="Reactome" id="R-DDI-203615">
    <property type="pathway name" value="eNOS activation"/>
</dbReference>
<dbReference type="Reactome" id="R-DDI-203754">
    <property type="pathway name" value="NOSIP mediated eNOS trafficking"/>
</dbReference>
<dbReference type="Reactome" id="R-DDI-392154">
    <property type="pathway name" value="Nitric oxide stimulates guanylate cyclase"/>
</dbReference>
<dbReference type="Reactome" id="R-DDI-5218920">
    <property type="pathway name" value="VEGFR2 mediated vascular permeability"/>
</dbReference>
<dbReference type="Reactome" id="R-DDI-5578775">
    <property type="pathway name" value="Ion homeostasis"/>
</dbReference>
<dbReference type="Reactome" id="R-DDI-9009391">
    <property type="pathway name" value="Extra-nuclear estrogen signaling"/>
</dbReference>
<dbReference type="Reactome" id="R-DDI-9033241">
    <property type="pathway name" value="Peroxisomal protein import"/>
</dbReference>
<dbReference type="Reactome" id="R-DDI-9856530">
    <property type="pathway name" value="High laminar flow shear stress activates signaling by PIEZO1 and PECAM1:CDH5:KDR in endothelial cells"/>
</dbReference>
<dbReference type="PRO" id="PR:Q55CT1"/>
<dbReference type="Proteomes" id="UP000002195">
    <property type="component" value="Chromosome 1"/>
</dbReference>
<dbReference type="GO" id="GO:0005829">
    <property type="term" value="C:cytosol"/>
    <property type="evidence" value="ECO:0000318"/>
    <property type="project" value="GO_Central"/>
</dbReference>
<dbReference type="GO" id="GO:0005789">
    <property type="term" value="C:endoplasmic reticulum membrane"/>
    <property type="evidence" value="ECO:0007669"/>
    <property type="project" value="UniProtKB-SubCell"/>
</dbReference>
<dbReference type="GO" id="GO:0050660">
    <property type="term" value="F:flavin adenine dinucleotide binding"/>
    <property type="evidence" value="ECO:0000318"/>
    <property type="project" value="GO_Central"/>
</dbReference>
<dbReference type="GO" id="GO:0010181">
    <property type="term" value="F:FMN binding"/>
    <property type="evidence" value="ECO:0000318"/>
    <property type="project" value="GO_Central"/>
</dbReference>
<dbReference type="GO" id="GO:0050661">
    <property type="term" value="F:NADP binding"/>
    <property type="evidence" value="ECO:0007669"/>
    <property type="project" value="UniProtKB-UniRule"/>
</dbReference>
<dbReference type="GO" id="GO:0003958">
    <property type="term" value="F:NADPH-hemoprotein reductase activity"/>
    <property type="evidence" value="ECO:0000318"/>
    <property type="project" value="GO_Central"/>
</dbReference>
<dbReference type="GO" id="GO:0016491">
    <property type="term" value="F:oxidoreductase activity"/>
    <property type="evidence" value="ECO:0000250"/>
    <property type="project" value="dictyBase"/>
</dbReference>
<dbReference type="CDD" id="cd06204">
    <property type="entry name" value="CYPOR"/>
    <property type="match status" value="1"/>
</dbReference>
<dbReference type="FunFam" id="1.20.990.10:FF:000001">
    <property type="entry name" value="NADPH--cytochrome P450 reductase"/>
    <property type="match status" value="1"/>
</dbReference>
<dbReference type="FunFam" id="3.40.50.360:FF:000024">
    <property type="entry name" value="NADPH--cytochrome P450 reductase"/>
    <property type="match status" value="1"/>
</dbReference>
<dbReference type="FunFam" id="3.40.50.80:FF:000001">
    <property type="entry name" value="NADPH--cytochrome P450 reductase 1"/>
    <property type="match status" value="1"/>
</dbReference>
<dbReference type="Gene3D" id="3.40.50.360">
    <property type="match status" value="1"/>
</dbReference>
<dbReference type="Gene3D" id="1.20.990.10">
    <property type="entry name" value="NADPH-cytochrome p450 Reductase, Chain A, domain 3"/>
    <property type="match status" value="1"/>
</dbReference>
<dbReference type="Gene3D" id="3.40.50.80">
    <property type="entry name" value="Nucleotide-binding domain of ferredoxin-NADP reductase (FNR) module"/>
    <property type="match status" value="1"/>
</dbReference>
<dbReference type="Gene3D" id="2.40.30.10">
    <property type="entry name" value="Translation factors"/>
    <property type="match status" value="1"/>
</dbReference>
<dbReference type="HAMAP" id="MF_03212">
    <property type="entry name" value="NCPR"/>
    <property type="match status" value="1"/>
</dbReference>
<dbReference type="InterPro" id="IPR003097">
    <property type="entry name" value="CysJ-like_FAD-binding"/>
</dbReference>
<dbReference type="InterPro" id="IPR017927">
    <property type="entry name" value="FAD-bd_FR_type"/>
</dbReference>
<dbReference type="InterPro" id="IPR001094">
    <property type="entry name" value="Flavdoxin-like"/>
</dbReference>
<dbReference type="InterPro" id="IPR008254">
    <property type="entry name" value="Flavodoxin/NO_synth"/>
</dbReference>
<dbReference type="InterPro" id="IPR001709">
    <property type="entry name" value="Flavoprot_Pyr_Nucl_cyt_Rdtase"/>
</dbReference>
<dbReference type="InterPro" id="IPR029039">
    <property type="entry name" value="Flavoprotein-like_sf"/>
</dbReference>
<dbReference type="InterPro" id="IPR039261">
    <property type="entry name" value="FNR_nucleotide-bd"/>
</dbReference>
<dbReference type="InterPro" id="IPR023173">
    <property type="entry name" value="NADPH_Cyt_P450_Rdtase_alpha"/>
</dbReference>
<dbReference type="InterPro" id="IPR001433">
    <property type="entry name" value="OxRdtase_FAD/NAD-bd"/>
</dbReference>
<dbReference type="InterPro" id="IPR023208">
    <property type="entry name" value="P450R"/>
</dbReference>
<dbReference type="InterPro" id="IPR017938">
    <property type="entry name" value="Riboflavin_synthase-like_b-brl"/>
</dbReference>
<dbReference type="PANTHER" id="PTHR19384:SF17">
    <property type="entry name" value="NADPH--CYTOCHROME P450 REDUCTASE"/>
    <property type="match status" value="1"/>
</dbReference>
<dbReference type="PANTHER" id="PTHR19384">
    <property type="entry name" value="NITRIC OXIDE SYNTHASE-RELATED"/>
    <property type="match status" value="1"/>
</dbReference>
<dbReference type="Pfam" id="PF00667">
    <property type="entry name" value="FAD_binding_1"/>
    <property type="match status" value="1"/>
</dbReference>
<dbReference type="Pfam" id="PF00258">
    <property type="entry name" value="Flavodoxin_1"/>
    <property type="match status" value="1"/>
</dbReference>
<dbReference type="Pfam" id="PF00175">
    <property type="entry name" value="NAD_binding_1"/>
    <property type="match status" value="1"/>
</dbReference>
<dbReference type="PIRSF" id="PIRSF000208">
    <property type="entry name" value="P450R"/>
    <property type="match status" value="1"/>
</dbReference>
<dbReference type="PRINTS" id="PR00369">
    <property type="entry name" value="FLAVODOXIN"/>
</dbReference>
<dbReference type="PRINTS" id="PR00371">
    <property type="entry name" value="FPNCR"/>
</dbReference>
<dbReference type="SUPFAM" id="SSF52343">
    <property type="entry name" value="Ferredoxin reductase-like, C-terminal NADP-linked domain"/>
    <property type="match status" value="1"/>
</dbReference>
<dbReference type="SUPFAM" id="SSF52218">
    <property type="entry name" value="Flavoproteins"/>
    <property type="match status" value="1"/>
</dbReference>
<dbReference type="SUPFAM" id="SSF63380">
    <property type="entry name" value="Riboflavin synthase domain-like"/>
    <property type="match status" value="1"/>
</dbReference>
<dbReference type="PROSITE" id="PS51384">
    <property type="entry name" value="FAD_FR"/>
    <property type="match status" value="1"/>
</dbReference>
<dbReference type="PROSITE" id="PS50902">
    <property type="entry name" value="FLAVODOXIN_LIKE"/>
    <property type="match status" value="1"/>
</dbReference>
<accession>Q55CT1</accession>
<keyword id="KW-0256">Endoplasmic reticulum</keyword>
<keyword id="KW-0274">FAD</keyword>
<keyword id="KW-0285">Flavoprotein</keyword>
<keyword id="KW-0288">FMN</keyword>
<keyword id="KW-0472">Membrane</keyword>
<keyword id="KW-0521">NADP</keyword>
<keyword id="KW-0560">Oxidoreductase</keyword>
<keyword id="KW-1185">Reference proteome</keyword>
<keyword id="KW-0812">Transmembrane</keyword>
<keyword id="KW-1133">Transmembrane helix</keyword>
<evidence type="ECO:0000255" key="1">
    <source>
        <dbReference type="HAMAP-Rule" id="MF_03212"/>
    </source>
</evidence>
<evidence type="ECO:0000269" key="2">
    <source>
    </source>
</evidence>
<organism>
    <name type="scientific">Dictyostelium discoideum</name>
    <name type="common">Social amoeba</name>
    <dbReference type="NCBI Taxonomy" id="44689"/>
    <lineage>
        <taxon>Eukaryota</taxon>
        <taxon>Amoebozoa</taxon>
        <taxon>Evosea</taxon>
        <taxon>Eumycetozoa</taxon>
        <taxon>Dictyostelia</taxon>
        <taxon>Dictyosteliales</taxon>
        <taxon>Dictyosteliaceae</taxon>
        <taxon>Dictyostelium</taxon>
    </lineage>
</organism>
<gene>
    <name type="primary">redB</name>
    <name type="ORF">DDB_G0269912</name>
</gene>
<name>NCPR_DICDI</name>
<comment type="function">
    <text evidence="1">This enzyme is required for electron transfer from NADP to cytochrome P450 in microsomes. It can also provide electron transfer to heme oxygenase and cytochrome B5.</text>
</comment>
<comment type="catalytic activity">
    <reaction evidence="1">
        <text>2 oxidized [cytochrome P450] + NADPH = 2 reduced [cytochrome P450] + NADP(+) + H(+)</text>
        <dbReference type="Rhea" id="RHEA:24040"/>
        <dbReference type="Rhea" id="RHEA-COMP:14627"/>
        <dbReference type="Rhea" id="RHEA-COMP:14628"/>
        <dbReference type="ChEBI" id="CHEBI:15378"/>
        <dbReference type="ChEBI" id="CHEBI:55376"/>
        <dbReference type="ChEBI" id="CHEBI:57783"/>
        <dbReference type="ChEBI" id="CHEBI:58349"/>
        <dbReference type="ChEBI" id="CHEBI:60344"/>
        <dbReference type="EC" id="1.6.2.4"/>
    </reaction>
</comment>
<comment type="cofactor">
    <cofactor evidence="1">
        <name>FAD</name>
        <dbReference type="ChEBI" id="CHEBI:57692"/>
    </cofactor>
    <text evidence="1">Binds 1 FAD per monomer.</text>
</comment>
<comment type="cofactor">
    <cofactor evidence="1">
        <name>FMN</name>
        <dbReference type="ChEBI" id="CHEBI:58210"/>
    </cofactor>
    <text evidence="1">Binds 1 FMN per monomer.</text>
</comment>
<comment type="subcellular location">
    <subcellularLocation>
        <location evidence="1">Endoplasmic reticulum membrane</location>
        <topology evidence="1">Single-pass membrane protein</topology>
        <orientation evidence="1">Cytoplasmic side</orientation>
    </subcellularLocation>
</comment>
<comment type="developmental stage">
    <text evidence="2">Present during growth and development.</text>
</comment>
<comment type="similarity">
    <text evidence="1">Belongs to the NADPH--cytochrome P450 reductase family.</text>
</comment>
<comment type="similarity">
    <text evidence="1">In the N-terminal section; belongs to the flavodoxin family.</text>
</comment>
<comment type="similarity">
    <text evidence="1">In the C-terminal section; belongs to the flavoprotein pyridine nucleotide cytochrome reductase family.</text>
</comment>
<protein>
    <recommendedName>
        <fullName evidence="1">NADPH--cytochrome P450 reductase</fullName>
        <shortName evidence="1">CPR</shortName>
        <shortName evidence="1">P450R</shortName>
        <ecNumber evidence="1">1.6.2.4</ecNumber>
    </recommendedName>
    <alternativeName>
        <fullName>NADPH oxidoreductase B</fullName>
    </alternativeName>
</protein>
<reference key="1">
    <citation type="journal article" date="2005" name="Nature">
        <title>The genome of the social amoeba Dictyostelium discoideum.</title>
        <authorList>
            <person name="Eichinger L."/>
            <person name="Pachebat J.A."/>
            <person name="Gloeckner G."/>
            <person name="Rajandream M.A."/>
            <person name="Sucgang R."/>
            <person name="Berriman M."/>
            <person name="Song J."/>
            <person name="Olsen R."/>
            <person name="Szafranski K."/>
            <person name="Xu Q."/>
            <person name="Tunggal B."/>
            <person name="Kummerfeld S."/>
            <person name="Madera M."/>
            <person name="Konfortov B.A."/>
            <person name="Rivero F."/>
            <person name="Bankier A.T."/>
            <person name="Lehmann R."/>
            <person name="Hamlin N."/>
            <person name="Davies R."/>
            <person name="Gaudet P."/>
            <person name="Fey P."/>
            <person name="Pilcher K."/>
            <person name="Chen G."/>
            <person name="Saunders D."/>
            <person name="Sodergren E.J."/>
            <person name="Davis P."/>
            <person name="Kerhornou A."/>
            <person name="Nie X."/>
            <person name="Hall N."/>
            <person name="Anjard C."/>
            <person name="Hemphill L."/>
            <person name="Bason N."/>
            <person name="Farbrother P."/>
            <person name="Desany B."/>
            <person name="Just E."/>
            <person name="Morio T."/>
            <person name="Rost R."/>
            <person name="Churcher C.M."/>
            <person name="Cooper J."/>
            <person name="Haydock S."/>
            <person name="van Driessche N."/>
            <person name="Cronin A."/>
            <person name="Goodhead I."/>
            <person name="Muzny D.M."/>
            <person name="Mourier T."/>
            <person name="Pain A."/>
            <person name="Lu M."/>
            <person name="Harper D."/>
            <person name="Lindsay R."/>
            <person name="Hauser H."/>
            <person name="James K.D."/>
            <person name="Quiles M."/>
            <person name="Madan Babu M."/>
            <person name="Saito T."/>
            <person name="Buchrieser C."/>
            <person name="Wardroper A."/>
            <person name="Felder M."/>
            <person name="Thangavelu M."/>
            <person name="Johnson D."/>
            <person name="Knights A."/>
            <person name="Loulseged H."/>
            <person name="Mungall K.L."/>
            <person name="Oliver K."/>
            <person name="Price C."/>
            <person name="Quail M.A."/>
            <person name="Urushihara H."/>
            <person name="Hernandez J."/>
            <person name="Rabbinowitsch E."/>
            <person name="Steffen D."/>
            <person name="Sanders M."/>
            <person name="Ma J."/>
            <person name="Kohara Y."/>
            <person name="Sharp S."/>
            <person name="Simmonds M.N."/>
            <person name="Spiegler S."/>
            <person name="Tivey A."/>
            <person name="Sugano S."/>
            <person name="White B."/>
            <person name="Walker D."/>
            <person name="Woodward J.R."/>
            <person name="Winckler T."/>
            <person name="Tanaka Y."/>
            <person name="Shaulsky G."/>
            <person name="Schleicher M."/>
            <person name="Weinstock G.M."/>
            <person name="Rosenthal A."/>
            <person name="Cox E.C."/>
            <person name="Chisholm R.L."/>
            <person name="Gibbs R.A."/>
            <person name="Loomis W.F."/>
            <person name="Platzer M."/>
            <person name="Kay R.R."/>
            <person name="Williams J.G."/>
            <person name="Dear P.H."/>
            <person name="Noegel A.A."/>
            <person name="Barrell B.G."/>
            <person name="Kuspa A."/>
        </authorList>
    </citation>
    <scope>NUCLEOTIDE SEQUENCE [LARGE SCALE GENOMIC DNA]</scope>
    <source>
        <strain>AX4</strain>
    </source>
</reference>
<reference key="2">
    <citation type="journal article" date="2008" name="BMC Dev. Biol.">
        <title>The P450 oxidoreductase, RedA, controls development beyond the mound stage in Dictyostelium discoideum.</title>
        <authorList>
            <person name="Gonzalez-Kristeller D.C."/>
            <person name="Farage L."/>
            <person name="Fiorini L.C."/>
            <person name="Loomis W.F."/>
            <person name="da Silva A.M."/>
        </authorList>
    </citation>
    <scope>DEVELOPMENTAL STAGE</scope>
</reference>
<sequence length="667" mass="76193">MEILESIDFIEVLILDNLGAIIIVAVIVGTYLYMNKPPPPPPVFNKPNNKINKEAQKPKKTITKNEDGKKVMKIFFGTQTRTAEDFSRIIEKECKKIGIPCEVVDLESYEHEQELHSESFVMFLVATHGEGDPTDNAKEFYLWLTNDERPTDLLNGVPFTVFGLGNKTYEHYNAVARVIDRRMEELGGKRVFERGEGDDDATLEEDFNRWKKDMWPVVCKFLGYELKSTEDDKFVPRFRMVTLNQDSKDINDPFIKIVSTPLKPKLSTDNKVIYDMKNPYYAEVLENRELHSNESDRSCRHIEFKLGDEVSYTTGDHLGVFPINDSKLVEQLIKRLGVNGDDMIALVPIDQEGSVIKASFGPMTIRRAFSEHLDITNPVRKSVLRALAESTTNEEEKKRLLYLATEEANEEYNKYIKNDFRGVVDLLESFPGLQPLIAHFLEFTPRLPARMYSISSSPHNKNGVVSITSVVVNFTTGNQRAHNGVASTWLSHLKVGDKVPLFVRESHFKLPSAATEQKPVIMVGPGTGLAPFRGFLQELQHRNHSQQQQSLLFFGCRSDTVDYIYREELEQYHQSSVLGDLVVAFSRKTSQKVYVQNKLLEHKEKVWELLNKGAYFYVCGDGRNMSKAVQQALLSIIKEFGSKDDNSAQQFIDDMSSHGRYLQDVWF</sequence>